<evidence type="ECO:0000255" key="1">
    <source>
        <dbReference type="HAMAP-Rule" id="MF_01547"/>
    </source>
</evidence>
<accession>Q1LLA8</accession>
<comment type="function">
    <text evidence="1">Specifically methylates the uridine in position 2552 of 23S rRNA at the 2'-O position of the ribose in the fully assembled 50S ribosomal subunit.</text>
</comment>
<comment type="catalytic activity">
    <reaction evidence="1">
        <text>uridine(2552) in 23S rRNA + S-adenosyl-L-methionine = 2'-O-methyluridine(2552) in 23S rRNA + S-adenosyl-L-homocysteine + H(+)</text>
        <dbReference type="Rhea" id="RHEA:42720"/>
        <dbReference type="Rhea" id="RHEA-COMP:10202"/>
        <dbReference type="Rhea" id="RHEA-COMP:10203"/>
        <dbReference type="ChEBI" id="CHEBI:15378"/>
        <dbReference type="ChEBI" id="CHEBI:57856"/>
        <dbReference type="ChEBI" id="CHEBI:59789"/>
        <dbReference type="ChEBI" id="CHEBI:65315"/>
        <dbReference type="ChEBI" id="CHEBI:74478"/>
        <dbReference type="EC" id="2.1.1.166"/>
    </reaction>
</comment>
<comment type="subcellular location">
    <subcellularLocation>
        <location evidence="1">Cytoplasm</location>
    </subcellularLocation>
</comment>
<comment type="similarity">
    <text evidence="1">Belongs to the class I-like SAM-binding methyltransferase superfamily. RNA methyltransferase RlmE family.</text>
</comment>
<organism>
    <name type="scientific">Cupriavidus metallidurans (strain ATCC 43123 / DSM 2839 / NBRC 102507 / CH34)</name>
    <name type="common">Ralstonia metallidurans</name>
    <dbReference type="NCBI Taxonomy" id="266264"/>
    <lineage>
        <taxon>Bacteria</taxon>
        <taxon>Pseudomonadati</taxon>
        <taxon>Pseudomonadota</taxon>
        <taxon>Betaproteobacteria</taxon>
        <taxon>Burkholderiales</taxon>
        <taxon>Burkholderiaceae</taxon>
        <taxon>Cupriavidus</taxon>
    </lineage>
</organism>
<dbReference type="EC" id="2.1.1.166" evidence="1"/>
<dbReference type="EMBL" id="CP000352">
    <property type="protein sequence ID" value="ABF09068.1"/>
    <property type="molecule type" value="Genomic_DNA"/>
</dbReference>
<dbReference type="RefSeq" id="WP_011516896.1">
    <property type="nucleotide sequence ID" value="NC_007973.1"/>
</dbReference>
<dbReference type="SMR" id="Q1LLA8"/>
<dbReference type="STRING" id="266264.Rmet_2189"/>
<dbReference type="KEGG" id="rme:Rmet_2189"/>
<dbReference type="eggNOG" id="COG0293">
    <property type="taxonomic scope" value="Bacteria"/>
</dbReference>
<dbReference type="HOGENOM" id="CLU_009422_4_1_4"/>
<dbReference type="Proteomes" id="UP000002429">
    <property type="component" value="Chromosome"/>
</dbReference>
<dbReference type="GO" id="GO:0005737">
    <property type="term" value="C:cytoplasm"/>
    <property type="evidence" value="ECO:0007669"/>
    <property type="project" value="UniProtKB-SubCell"/>
</dbReference>
<dbReference type="GO" id="GO:0008650">
    <property type="term" value="F:rRNA (uridine-2'-O-)-methyltransferase activity"/>
    <property type="evidence" value="ECO:0007669"/>
    <property type="project" value="UniProtKB-UniRule"/>
</dbReference>
<dbReference type="FunFam" id="3.40.50.150:FF:000005">
    <property type="entry name" value="Ribosomal RNA large subunit methyltransferase E"/>
    <property type="match status" value="1"/>
</dbReference>
<dbReference type="Gene3D" id="3.40.50.150">
    <property type="entry name" value="Vaccinia Virus protein VP39"/>
    <property type="match status" value="1"/>
</dbReference>
<dbReference type="HAMAP" id="MF_01547">
    <property type="entry name" value="RNA_methyltr_E"/>
    <property type="match status" value="1"/>
</dbReference>
<dbReference type="InterPro" id="IPR050082">
    <property type="entry name" value="RNA_methyltr_RlmE"/>
</dbReference>
<dbReference type="InterPro" id="IPR002877">
    <property type="entry name" value="RNA_MeTrfase_FtsJ_dom"/>
</dbReference>
<dbReference type="InterPro" id="IPR015507">
    <property type="entry name" value="rRNA-MeTfrase_E"/>
</dbReference>
<dbReference type="InterPro" id="IPR029063">
    <property type="entry name" value="SAM-dependent_MTases_sf"/>
</dbReference>
<dbReference type="PANTHER" id="PTHR10920">
    <property type="entry name" value="RIBOSOMAL RNA METHYLTRANSFERASE"/>
    <property type="match status" value="1"/>
</dbReference>
<dbReference type="PANTHER" id="PTHR10920:SF18">
    <property type="entry name" value="RRNA METHYLTRANSFERASE 2, MITOCHONDRIAL"/>
    <property type="match status" value="1"/>
</dbReference>
<dbReference type="Pfam" id="PF01728">
    <property type="entry name" value="FtsJ"/>
    <property type="match status" value="1"/>
</dbReference>
<dbReference type="PIRSF" id="PIRSF005461">
    <property type="entry name" value="23S_rRNA_mtase"/>
    <property type="match status" value="1"/>
</dbReference>
<dbReference type="SUPFAM" id="SSF53335">
    <property type="entry name" value="S-adenosyl-L-methionine-dependent methyltransferases"/>
    <property type="match status" value="1"/>
</dbReference>
<protein>
    <recommendedName>
        <fullName evidence="1">Ribosomal RNA large subunit methyltransferase E</fullName>
        <ecNumber evidence="1">2.1.1.166</ecNumber>
    </recommendedName>
    <alternativeName>
        <fullName evidence="1">23S rRNA Um2552 methyltransferase</fullName>
    </alternativeName>
    <alternativeName>
        <fullName evidence="1">rRNA (uridine-2'-O-)-methyltransferase</fullName>
    </alternativeName>
</protein>
<proteinExistence type="inferred from homology"/>
<sequence>MAKNKFNQSWLHDHINDPYVKMAQREGYRARAAYKLKEIDDQDKLIQPGQVIVDLGAAPGSWSQYARNKLAASPRAKDGRIDGAVVAIDILPMEPVADVTFIQGDFREEEVFRQLEQVVLDASGGSRIDLVISDMAPNLSGVASADAARIEYLCDLALDFAQAHLKPEGSLLVKCFHGSGYSQIVEKFKRQFKVVASRKPKASRDKSSETFILGRYLKSVD</sequence>
<feature type="chain" id="PRO_0000282781" description="Ribosomal RNA large subunit methyltransferase E">
    <location>
        <begin position="1"/>
        <end position="221"/>
    </location>
</feature>
<feature type="active site" description="Proton acceptor" evidence="1">
    <location>
        <position position="174"/>
    </location>
</feature>
<feature type="binding site" evidence="1">
    <location>
        <position position="60"/>
    </location>
    <ligand>
        <name>S-adenosyl-L-methionine</name>
        <dbReference type="ChEBI" id="CHEBI:59789"/>
    </ligand>
</feature>
<feature type="binding site" evidence="1">
    <location>
        <position position="62"/>
    </location>
    <ligand>
        <name>S-adenosyl-L-methionine</name>
        <dbReference type="ChEBI" id="CHEBI:59789"/>
    </ligand>
</feature>
<feature type="binding site" evidence="1">
    <location>
        <position position="89"/>
    </location>
    <ligand>
        <name>S-adenosyl-L-methionine</name>
        <dbReference type="ChEBI" id="CHEBI:59789"/>
    </ligand>
</feature>
<feature type="binding site" evidence="1">
    <location>
        <position position="105"/>
    </location>
    <ligand>
        <name>S-adenosyl-L-methionine</name>
        <dbReference type="ChEBI" id="CHEBI:59789"/>
    </ligand>
</feature>
<feature type="binding site" evidence="1">
    <location>
        <position position="134"/>
    </location>
    <ligand>
        <name>S-adenosyl-L-methionine</name>
        <dbReference type="ChEBI" id="CHEBI:59789"/>
    </ligand>
</feature>
<gene>
    <name evidence="1" type="primary">rlmE</name>
    <name evidence="1" type="synonym">ftsJ</name>
    <name evidence="1" type="synonym">rrmJ</name>
    <name type="ordered locus">Rmet_2189</name>
</gene>
<reference key="1">
    <citation type="journal article" date="2010" name="PLoS ONE">
        <title>The complete genome sequence of Cupriavidus metallidurans strain CH34, a master survivalist in harsh and anthropogenic environments.</title>
        <authorList>
            <person name="Janssen P.J."/>
            <person name="Van Houdt R."/>
            <person name="Moors H."/>
            <person name="Monsieurs P."/>
            <person name="Morin N."/>
            <person name="Michaux A."/>
            <person name="Benotmane M.A."/>
            <person name="Leys N."/>
            <person name="Vallaeys T."/>
            <person name="Lapidus A."/>
            <person name="Monchy S."/>
            <person name="Medigue C."/>
            <person name="Taghavi S."/>
            <person name="McCorkle S."/>
            <person name="Dunn J."/>
            <person name="van der Lelie D."/>
            <person name="Mergeay M."/>
        </authorList>
    </citation>
    <scope>NUCLEOTIDE SEQUENCE [LARGE SCALE GENOMIC DNA]</scope>
    <source>
        <strain>ATCC 43123 / DSM 2839 / NBRC 102507 / CH34</strain>
    </source>
</reference>
<name>RLME_CUPMC</name>
<keyword id="KW-0963">Cytoplasm</keyword>
<keyword id="KW-0489">Methyltransferase</keyword>
<keyword id="KW-1185">Reference proteome</keyword>
<keyword id="KW-0698">rRNA processing</keyword>
<keyword id="KW-0949">S-adenosyl-L-methionine</keyword>
<keyword id="KW-0808">Transferase</keyword>